<organism>
    <name type="scientific">Meyerozyma guilliermondii (strain ATCC 6260 / CBS 566 / DSM 6381 / JCM 1539 / NBRC 10279 / NRRL Y-324)</name>
    <name type="common">Yeast</name>
    <name type="synonym">Candida guilliermondii</name>
    <dbReference type="NCBI Taxonomy" id="294746"/>
    <lineage>
        <taxon>Eukaryota</taxon>
        <taxon>Fungi</taxon>
        <taxon>Dikarya</taxon>
        <taxon>Ascomycota</taxon>
        <taxon>Saccharomycotina</taxon>
        <taxon>Pichiomycetes</taxon>
        <taxon>Debaryomycetaceae</taxon>
        <taxon>Meyerozyma</taxon>
    </lineage>
</organism>
<protein>
    <recommendedName>
        <fullName>Iron-sulfur cluster assembly factor IBA57 homolog, mitochondrial</fullName>
    </recommendedName>
</protein>
<accession>A5DQ50</accession>
<feature type="transit peptide" description="Mitochondrion" evidence="2">
    <location>
        <begin position="1"/>
        <end position="42"/>
    </location>
</feature>
<feature type="chain" id="PRO_0000301706" description="Iron-sulfur cluster assembly factor IBA57 homolog, mitochondrial">
    <location>
        <begin position="43"/>
        <end position="436"/>
    </location>
</feature>
<feature type="region of interest" description="Disordered" evidence="3">
    <location>
        <begin position="359"/>
        <end position="387"/>
    </location>
</feature>
<evidence type="ECO:0000250" key="1">
    <source>
        <dbReference type="UniProtKB" id="P47158"/>
    </source>
</evidence>
<evidence type="ECO:0000255" key="2"/>
<evidence type="ECO:0000256" key="3">
    <source>
        <dbReference type="SAM" id="MobiDB-lite"/>
    </source>
</evidence>
<evidence type="ECO:0000305" key="4"/>
<comment type="subcellular location">
    <subcellularLocation>
        <location evidence="1">Mitochondrion matrix</location>
    </subcellularLocation>
</comment>
<comment type="similarity">
    <text evidence="4">Belongs to the GcvT family. CAF17/IBA57 subfamily.</text>
</comment>
<gene>
    <name type="primary">CAF17</name>
    <name type="ORF">PGUG_05401</name>
</gene>
<proteinExistence type="inferred from homology"/>
<name>CAF17_PICGU</name>
<reference key="1">
    <citation type="journal article" date="2009" name="Nature">
        <title>Evolution of pathogenicity and sexual reproduction in eight Candida genomes.</title>
        <authorList>
            <person name="Butler G."/>
            <person name="Rasmussen M.D."/>
            <person name="Lin M.F."/>
            <person name="Santos M.A.S."/>
            <person name="Sakthikumar S."/>
            <person name="Munro C.A."/>
            <person name="Rheinbay E."/>
            <person name="Grabherr M."/>
            <person name="Forche A."/>
            <person name="Reedy J.L."/>
            <person name="Agrafioti I."/>
            <person name="Arnaud M.B."/>
            <person name="Bates S."/>
            <person name="Brown A.J.P."/>
            <person name="Brunke S."/>
            <person name="Costanzo M.C."/>
            <person name="Fitzpatrick D.A."/>
            <person name="de Groot P.W.J."/>
            <person name="Harris D."/>
            <person name="Hoyer L.L."/>
            <person name="Hube B."/>
            <person name="Klis F.M."/>
            <person name="Kodira C."/>
            <person name="Lennard N."/>
            <person name="Logue M.E."/>
            <person name="Martin R."/>
            <person name="Neiman A.M."/>
            <person name="Nikolaou E."/>
            <person name="Quail M.A."/>
            <person name="Quinn J."/>
            <person name="Santos M.C."/>
            <person name="Schmitzberger F.F."/>
            <person name="Sherlock G."/>
            <person name="Shah P."/>
            <person name="Silverstein K.A.T."/>
            <person name="Skrzypek M.S."/>
            <person name="Soll D."/>
            <person name="Staggs R."/>
            <person name="Stansfield I."/>
            <person name="Stumpf M.P.H."/>
            <person name="Sudbery P.E."/>
            <person name="Srikantha T."/>
            <person name="Zeng Q."/>
            <person name="Berman J."/>
            <person name="Berriman M."/>
            <person name="Heitman J."/>
            <person name="Gow N.A.R."/>
            <person name="Lorenz M.C."/>
            <person name="Birren B.W."/>
            <person name="Kellis M."/>
            <person name="Cuomo C.A."/>
        </authorList>
    </citation>
    <scope>NUCLEOTIDE SEQUENCE [LARGE SCALE GENOMIC DNA]</scope>
    <source>
        <strain>ATCC 6260 / CBS 566 / DSM 6381 / JCM 1539 / NBRC 10279 / NRRL Y-324</strain>
    </source>
</reference>
<dbReference type="EMBL" id="CH408161">
    <property type="protein sequence ID" value="EDK41303.2"/>
    <property type="molecule type" value="Genomic_DNA"/>
</dbReference>
<dbReference type="RefSeq" id="XP_001482381.1">
    <property type="nucleotide sequence ID" value="XM_001482331.1"/>
</dbReference>
<dbReference type="SMR" id="A5DQ50"/>
<dbReference type="FunCoup" id="A5DQ50">
    <property type="interactions" value="299"/>
</dbReference>
<dbReference type="STRING" id="294746.A5DQ50"/>
<dbReference type="GeneID" id="5124315"/>
<dbReference type="KEGG" id="pgu:PGUG_05401"/>
<dbReference type="VEuPathDB" id="FungiDB:PGUG_05401"/>
<dbReference type="eggNOG" id="KOG2929">
    <property type="taxonomic scope" value="Eukaryota"/>
</dbReference>
<dbReference type="HOGENOM" id="CLU_007884_7_3_1"/>
<dbReference type="InParanoid" id="A5DQ50"/>
<dbReference type="OMA" id="PFECNLD"/>
<dbReference type="OrthoDB" id="191995at2759"/>
<dbReference type="Proteomes" id="UP000001997">
    <property type="component" value="Unassembled WGS sequence"/>
</dbReference>
<dbReference type="GO" id="GO:0005759">
    <property type="term" value="C:mitochondrial matrix"/>
    <property type="evidence" value="ECO:0007669"/>
    <property type="project" value="TreeGrafter"/>
</dbReference>
<dbReference type="GO" id="GO:0016740">
    <property type="term" value="F:transferase activity"/>
    <property type="evidence" value="ECO:0007669"/>
    <property type="project" value="UniProtKB-KW"/>
</dbReference>
<dbReference type="GO" id="GO:0016226">
    <property type="term" value="P:iron-sulfur cluster assembly"/>
    <property type="evidence" value="ECO:0007669"/>
    <property type="project" value="TreeGrafter"/>
</dbReference>
<dbReference type="Gene3D" id="2.40.30.160">
    <property type="match status" value="1"/>
</dbReference>
<dbReference type="Gene3D" id="3.30.1360.120">
    <property type="entry name" value="Probable tRNA modification gtpase trme, domain 1"/>
    <property type="match status" value="1"/>
</dbReference>
<dbReference type="InterPro" id="IPR027266">
    <property type="entry name" value="TrmE/GcvT_dom1"/>
</dbReference>
<dbReference type="InterPro" id="IPR045179">
    <property type="entry name" value="YgfZ/GcvT"/>
</dbReference>
<dbReference type="InterPro" id="IPR017703">
    <property type="entry name" value="YgfZ/GcvT_CS"/>
</dbReference>
<dbReference type="NCBIfam" id="TIGR03317">
    <property type="entry name" value="ygfZ_signature"/>
    <property type="match status" value="1"/>
</dbReference>
<dbReference type="PANTHER" id="PTHR22602">
    <property type="entry name" value="TRANSFERASE CAF17, MITOCHONDRIAL-RELATED"/>
    <property type="match status" value="1"/>
</dbReference>
<dbReference type="PANTHER" id="PTHR22602:SF0">
    <property type="entry name" value="TRANSFERASE CAF17, MITOCHONDRIAL-RELATED"/>
    <property type="match status" value="1"/>
</dbReference>
<dbReference type="Pfam" id="PF25455">
    <property type="entry name" value="Beta-barrel_CAF17_C"/>
    <property type="match status" value="1"/>
</dbReference>
<dbReference type="SUPFAM" id="SSF103025">
    <property type="entry name" value="Folate-binding domain"/>
    <property type="match status" value="1"/>
</dbReference>
<keyword id="KW-0496">Mitochondrion</keyword>
<keyword id="KW-1185">Reference proteome</keyword>
<keyword id="KW-0809">Transit peptide</keyword>
<sequence>MFPPIGLATLPKALIRIHGPDATKFVNGLVTTRLLPDIVKKKQHTISENENSHQELSQIIDVHRNWGLMHEDIYDPSNTIYVSRGGINSMFLNSKGRVFTDCFIYAHPFANSSENDHPDYVVEVDESLRTKLQMLLKLHKLAAKVNIEKLENVESHYYYNDTPEFDSFLEELQNNYILTKDPSQAREMAQRLIDDQAIFGPNIPVVGFAVDNRIPNFGIKFLTKQLQNQDPFSSSFKSQFESPSVSAQDVAVRRYTNGLLEQADVSSDVSILPFETNLDFTNGLSLDKGCYVGQELTIRTFNGGTIRKRVVPVQFFELKNVESMAAKHEPEYNLKDAVVDHLSKITQTDLKSLVISRMDGSDATEEHQTSSPFGSSKPVRKRKSGSGKILARHGNVGLALMNLGEIEHQSMFKVTIGDEDDTEIGLKSFVPGWWPQ</sequence>